<comment type="function">
    <text evidence="1">Converts GTP to 7,8-dihydroneopterin triphosphate.</text>
</comment>
<comment type="catalytic activity">
    <reaction evidence="1">
        <text>GTP + H2O = 7,8-dihydroneopterin 3'-triphosphate + formate + H(+)</text>
        <dbReference type="Rhea" id="RHEA:17473"/>
        <dbReference type="ChEBI" id="CHEBI:15377"/>
        <dbReference type="ChEBI" id="CHEBI:15378"/>
        <dbReference type="ChEBI" id="CHEBI:15740"/>
        <dbReference type="ChEBI" id="CHEBI:37565"/>
        <dbReference type="ChEBI" id="CHEBI:58462"/>
        <dbReference type="EC" id="3.5.4.16"/>
    </reaction>
</comment>
<comment type="pathway">
    <text evidence="1">Cofactor biosynthesis; 7,8-dihydroneopterin triphosphate biosynthesis; 7,8-dihydroneopterin triphosphate from GTP: step 1/1.</text>
</comment>
<comment type="similarity">
    <text evidence="1">Belongs to the GTP cyclohydrolase IV family.</text>
</comment>
<feature type="chain" id="PRO_0000289520" description="GTP cyclohydrolase FolE2">
    <location>
        <begin position="1"/>
        <end position="264"/>
    </location>
</feature>
<feature type="site" description="May be catalytically important" evidence="1">
    <location>
        <position position="150"/>
    </location>
</feature>
<name>GCH4_RUTMC</name>
<protein>
    <recommendedName>
        <fullName evidence="1">GTP cyclohydrolase FolE2</fullName>
        <ecNumber evidence="1">3.5.4.16</ecNumber>
    </recommendedName>
</protein>
<sequence length="264" mass="29971">MSAIHLPDTQNSADTRQIIIDKVGIKDITHPITYIDCDGNKIPTIGIFTMTVSLSERVKGTHMSRFIEILNEGPCEFSAHNFDKIIDKVRKRLESDIAHITLNFTFFRRKKAPSSGVESMMDYQVTLYGTLNKDEVQVMMKVVVPVTSLCPCSKSISKYGAHNQRSHITIKAKAAKDKTLHIEDLIDLAERKASCELYAILKRDDEKVVTERAYDNPAFVEDLVRDIAVDLNADDKISYYRLESENFESIHNHSAYALIENQKC</sequence>
<dbReference type="EC" id="3.5.4.16" evidence="1"/>
<dbReference type="EMBL" id="CP000488">
    <property type="protein sequence ID" value="ABL02082.1"/>
    <property type="molecule type" value="Genomic_DNA"/>
</dbReference>
<dbReference type="RefSeq" id="WP_011737707.1">
    <property type="nucleotide sequence ID" value="NC_008610.1"/>
</dbReference>
<dbReference type="SMR" id="A1AVX5"/>
<dbReference type="STRING" id="413404.Rmag_0304"/>
<dbReference type="KEGG" id="rma:Rmag_0304"/>
<dbReference type="eggNOG" id="COG1469">
    <property type="taxonomic scope" value="Bacteria"/>
</dbReference>
<dbReference type="HOGENOM" id="CLU_062816_1_1_6"/>
<dbReference type="OrthoDB" id="9774824at2"/>
<dbReference type="UniPathway" id="UPA00848">
    <property type="reaction ID" value="UER00151"/>
</dbReference>
<dbReference type="Proteomes" id="UP000002587">
    <property type="component" value="Chromosome"/>
</dbReference>
<dbReference type="GO" id="GO:0003934">
    <property type="term" value="F:GTP cyclohydrolase I activity"/>
    <property type="evidence" value="ECO:0007669"/>
    <property type="project" value="UniProtKB-UniRule"/>
</dbReference>
<dbReference type="GO" id="GO:0046654">
    <property type="term" value="P:tetrahydrofolate biosynthetic process"/>
    <property type="evidence" value="ECO:0007669"/>
    <property type="project" value="UniProtKB-UniRule"/>
</dbReference>
<dbReference type="Gene3D" id="3.10.270.10">
    <property type="entry name" value="Urate Oxidase"/>
    <property type="match status" value="1"/>
</dbReference>
<dbReference type="HAMAP" id="MF_01527_B">
    <property type="entry name" value="GTP_cyclohydrol_B"/>
    <property type="match status" value="1"/>
</dbReference>
<dbReference type="InterPro" id="IPR022838">
    <property type="entry name" value="GTP_cyclohydrolase_FolE2"/>
</dbReference>
<dbReference type="InterPro" id="IPR003801">
    <property type="entry name" value="GTP_cyclohydrolase_FolE2/MptA"/>
</dbReference>
<dbReference type="NCBIfam" id="NF010200">
    <property type="entry name" value="PRK13674.1-1"/>
    <property type="match status" value="1"/>
</dbReference>
<dbReference type="PANTHER" id="PTHR36445">
    <property type="entry name" value="GTP CYCLOHYDROLASE MPTA"/>
    <property type="match status" value="1"/>
</dbReference>
<dbReference type="PANTHER" id="PTHR36445:SF1">
    <property type="entry name" value="GTP CYCLOHYDROLASE MPTA"/>
    <property type="match status" value="1"/>
</dbReference>
<dbReference type="Pfam" id="PF02649">
    <property type="entry name" value="GCHY-1"/>
    <property type="match status" value="1"/>
</dbReference>
<accession>A1AVX5</accession>
<gene>
    <name evidence="1" type="primary">folE2</name>
    <name type="ordered locus">Rmag_0304</name>
</gene>
<keyword id="KW-0378">Hydrolase</keyword>
<evidence type="ECO:0000255" key="1">
    <source>
        <dbReference type="HAMAP-Rule" id="MF_01527"/>
    </source>
</evidence>
<reference key="1">
    <citation type="journal article" date="2007" name="Science">
        <title>The Calyptogena magnifica chemoautotrophic symbiont genome.</title>
        <authorList>
            <person name="Newton I.L.G."/>
            <person name="Woyke T."/>
            <person name="Auchtung T.A."/>
            <person name="Dilly G.F."/>
            <person name="Dutton R.J."/>
            <person name="Fisher M.C."/>
            <person name="Fontanez K.M."/>
            <person name="Lau E."/>
            <person name="Stewart F.J."/>
            <person name="Richardson P.M."/>
            <person name="Barry K.W."/>
            <person name="Saunders E."/>
            <person name="Detter J.C."/>
            <person name="Wu D."/>
            <person name="Eisen J.A."/>
            <person name="Cavanaugh C.M."/>
        </authorList>
    </citation>
    <scope>NUCLEOTIDE SEQUENCE [LARGE SCALE GENOMIC DNA]</scope>
</reference>
<organism>
    <name type="scientific">Ruthia magnifica subsp. Calyptogena magnifica</name>
    <dbReference type="NCBI Taxonomy" id="413404"/>
    <lineage>
        <taxon>Bacteria</taxon>
        <taxon>Pseudomonadati</taxon>
        <taxon>Pseudomonadota</taxon>
        <taxon>Gammaproteobacteria</taxon>
        <taxon>Candidatus Pseudothioglobaceae</taxon>
        <taxon>Candidatus Ruthturnera</taxon>
    </lineage>
</organism>
<proteinExistence type="inferred from homology"/>